<dbReference type="EMBL" id="X17498">
    <property type="protein sequence ID" value="CAA35538.1"/>
    <property type="molecule type" value="Genomic_DNA"/>
</dbReference>
<dbReference type="EMBL" id="U30821">
    <property type="protein sequence ID" value="AAA81229.1"/>
    <property type="molecule type" value="Genomic_DNA"/>
</dbReference>
<dbReference type="PIR" id="S08235">
    <property type="entry name" value="R3KT19"/>
</dbReference>
<dbReference type="RefSeq" id="NP_043198.1">
    <property type="nucleotide sequence ID" value="NC_001675.1"/>
</dbReference>
<dbReference type="SMR" id="P15761"/>
<dbReference type="GeneID" id="801541"/>
<dbReference type="GO" id="GO:0009842">
    <property type="term" value="C:cyanelle"/>
    <property type="evidence" value="ECO:0007669"/>
    <property type="project" value="UniProtKB-SubCell"/>
</dbReference>
<dbReference type="GO" id="GO:0005763">
    <property type="term" value="C:mitochondrial small ribosomal subunit"/>
    <property type="evidence" value="ECO:0007669"/>
    <property type="project" value="TreeGrafter"/>
</dbReference>
<dbReference type="GO" id="GO:0019843">
    <property type="term" value="F:rRNA binding"/>
    <property type="evidence" value="ECO:0007669"/>
    <property type="project" value="UniProtKB-KW"/>
</dbReference>
<dbReference type="GO" id="GO:0003735">
    <property type="term" value="F:structural constituent of ribosome"/>
    <property type="evidence" value="ECO:0007669"/>
    <property type="project" value="InterPro"/>
</dbReference>
<dbReference type="GO" id="GO:0000028">
    <property type="term" value="P:ribosomal small subunit assembly"/>
    <property type="evidence" value="ECO:0007669"/>
    <property type="project" value="TreeGrafter"/>
</dbReference>
<dbReference type="GO" id="GO:0006412">
    <property type="term" value="P:translation"/>
    <property type="evidence" value="ECO:0007669"/>
    <property type="project" value="InterPro"/>
</dbReference>
<dbReference type="FunFam" id="3.30.860.10:FF:000001">
    <property type="entry name" value="30S ribosomal protein S19"/>
    <property type="match status" value="1"/>
</dbReference>
<dbReference type="Gene3D" id="3.30.860.10">
    <property type="entry name" value="30s Ribosomal Protein S19, Chain A"/>
    <property type="match status" value="1"/>
</dbReference>
<dbReference type="HAMAP" id="MF_00531">
    <property type="entry name" value="Ribosomal_uS19"/>
    <property type="match status" value="1"/>
</dbReference>
<dbReference type="InterPro" id="IPR002222">
    <property type="entry name" value="Ribosomal_uS19"/>
</dbReference>
<dbReference type="InterPro" id="IPR005732">
    <property type="entry name" value="Ribosomal_uS19_bac-type"/>
</dbReference>
<dbReference type="InterPro" id="IPR020934">
    <property type="entry name" value="Ribosomal_uS19_CS"/>
</dbReference>
<dbReference type="InterPro" id="IPR023575">
    <property type="entry name" value="Ribosomal_uS19_SF"/>
</dbReference>
<dbReference type="NCBIfam" id="TIGR01050">
    <property type="entry name" value="rpsS_bact"/>
    <property type="match status" value="1"/>
</dbReference>
<dbReference type="PANTHER" id="PTHR11880">
    <property type="entry name" value="RIBOSOMAL PROTEIN S19P FAMILY MEMBER"/>
    <property type="match status" value="1"/>
</dbReference>
<dbReference type="PANTHER" id="PTHR11880:SF8">
    <property type="entry name" value="SMALL RIBOSOMAL SUBUNIT PROTEIN US19M"/>
    <property type="match status" value="1"/>
</dbReference>
<dbReference type="Pfam" id="PF00203">
    <property type="entry name" value="Ribosomal_S19"/>
    <property type="match status" value="1"/>
</dbReference>
<dbReference type="PIRSF" id="PIRSF002144">
    <property type="entry name" value="Ribosomal_S19"/>
    <property type="match status" value="1"/>
</dbReference>
<dbReference type="PRINTS" id="PR00975">
    <property type="entry name" value="RIBOSOMALS19"/>
</dbReference>
<dbReference type="SUPFAM" id="SSF54570">
    <property type="entry name" value="Ribosomal protein S19"/>
    <property type="match status" value="1"/>
</dbReference>
<dbReference type="PROSITE" id="PS00323">
    <property type="entry name" value="RIBOSOMAL_S19"/>
    <property type="match status" value="1"/>
</dbReference>
<proteinExistence type="inferred from homology"/>
<feature type="chain" id="PRO_0000129949" description="Small ribosomal subunit protein uS19c">
    <location>
        <begin position="1"/>
        <end position="92"/>
    </location>
</feature>
<sequence>MARSLKKGPFIAHHLLKKVELLNTSGKTEVIKTWSRASTILPMMVGHTIAVHNGRQHLPVFITDQMVGHKLGEFAPTRTFKGHTKSDKKARR</sequence>
<evidence type="ECO:0000250" key="1"/>
<evidence type="ECO:0000305" key="2"/>
<reference key="1">
    <citation type="journal article" date="1990" name="J. Mol. Evol.">
        <title>The nucleotide sequence of five ribosomal protein genes from the cyanelles of Cyanophora paradoxa: implications concerning the phylogenetic relationship between cyanelles and chloroplasts.</title>
        <authorList>
            <person name="Evrard J.L."/>
            <person name="Kuntz M."/>
            <person name="Weil J.H."/>
        </authorList>
    </citation>
    <scope>NUCLEOTIDE SEQUENCE [GENOMIC DNA]</scope>
    <source>
        <strain>UTEX LB 555 / Pringsheim</strain>
    </source>
</reference>
<reference key="2">
    <citation type="journal article" date="1995" name="Plant Mol. Biol. Rep.">
        <title>Nucleotide sequence of the cyanelle DNA from Cyanophora paradoxa.</title>
        <authorList>
            <person name="Stirewalt V.L."/>
            <person name="Michalowski C.B."/>
            <person name="Loeffelhardt W."/>
            <person name="Bohnert H.J."/>
            <person name="Bryant D.A."/>
        </authorList>
    </citation>
    <scope>NUCLEOTIDE SEQUENCE [LARGE SCALE GENOMIC DNA]</scope>
    <source>
        <strain>UTEX LB 555 / Pringsheim</strain>
    </source>
</reference>
<reference key="3">
    <citation type="book" date="1997" name="Eukaryotism and symbiosis">
        <title>The complete sequence of the cyanelle genome of Cyanophora paradoxa: the genetic complexity of a primitive plastid.</title>
        <editorList>
            <person name="Schenk H.E.A."/>
            <person name="Herrmann R."/>
            <person name="Jeon K.W."/>
            <person name="Mueller N.E."/>
            <person name="Schwemmler W."/>
        </editorList>
        <authorList>
            <person name="Loeffelhardt W."/>
            <person name="Stirewalt V.L."/>
            <person name="Michalowski C.B."/>
            <person name="Annarella M."/>
            <person name="Farley J.Y."/>
            <person name="Schluchter W.M."/>
            <person name="Chung S."/>
            <person name="Newmann-Spallart C."/>
            <person name="Steiner J.M."/>
            <person name="Jakowitsch J."/>
            <person name="Bohnert H.J."/>
            <person name="Bryant D.A."/>
        </authorList>
    </citation>
    <scope>NUCLEOTIDE SEQUENCE [LARGE SCALE GENOMIC DNA]</scope>
    <source>
        <strain>UTEX LB 555 / Pringsheim</strain>
    </source>
</reference>
<geneLocation type="cyanelle"/>
<accession>P15761</accession>
<protein>
    <recommendedName>
        <fullName evidence="2">Small ribosomal subunit protein uS19c</fullName>
    </recommendedName>
    <alternativeName>
        <fullName>Cyanelle 30S ribosomal protein S19</fullName>
    </alternativeName>
</protein>
<keyword id="KW-0194">Cyanelle</keyword>
<keyword id="KW-0934">Plastid</keyword>
<keyword id="KW-0687">Ribonucleoprotein</keyword>
<keyword id="KW-0689">Ribosomal protein</keyword>
<keyword id="KW-0694">RNA-binding</keyword>
<keyword id="KW-0699">rRNA-binding</keyword>
<comment type="function">
    <text evidence="1">Protein S19 forms a complex with S13 that binds strongly to the 16S ribosomal RNA.</text>
</comment>
<comment type="subcellular location">
    <subcellularLocation>
        <location>Plastid</location>
        <location>Cyanelle</location>
    </subcellularLocation>
</comment>
<comment type="similarity">
    <text evidence="2">Belongs to the universal ribosomal protein uS19 family.</text>
</comment>
<gene>
    <name type="primary">rps19</name>
</gene>
<name>RR19_CYAPA</name>
<organism>
    <name type="scientific">Cyanophora paradoxa</name>
    <dbReference type="NCBI Taxonomy" id="2762"/>
    <lineage>
        <taxon>Eukaryota</taxon>
        <taxon>Glaucocystophyceae</taxon>
        <taxon>Cyanophoraceae</taxon>
        <taxon>Cyanophora</taxon>
    </lineage>
</organism>